<organism>
    <name type="scientific">Acinetobacter baumannii (strain ACICU)</name>
    <dbReference type="NCBI Taxonomy" id="405416"/>
    <lineage>
        <taxon>Bacteria</taxon>
        <taxon>Pseudomonadati</taxon>
        <taxon>Pseudomonadota</taxon>
        <taxon>Gammaproteobacteria</taxon>
        <taxon>Moraxellales</taxon>
        <taxon>Moraxellaceae</taxon>
        <taxon>Acinetobacter</taxon>
        <taxon>Acinetobacter calcoaceticus/baumannii complex</taxon>
    </lineage>
</organism>
<sequence length="228" mass="25236">MTVQIITIDGPSGSGKGTLAAKLAAYYQFHLLDSGALYRLLGLSLHKHDLLEKLDSHLDECVNYARQLNIKFETSAEGTLVFLDGEDVTQTIRTERVGEYASKVAAIPELRQALFERQRAFAQTPGLVADGRDMATSIFPEANAKIYLTASAESRAERRVKQLQGMGLDAKINDILANIQARDKRDMEREVAPLKPAADAYIIDSSELTIDQVFKLMVDYVNSRTVSN</sequence>
<protein>
    <recommendedName>
        <fullName evidence="1">Cytidylate kinase</fullName>
        <shortName evidence="1">CK</shortName>
        <ecNumber evidence="1">2.7.4.25</ecNumber>
    </recommendedName>
    <alternativeName>
        <fullName evidence="1">Cytidine monophosphate kinase</fullName>
        <shortName evidence="1">CMP kinase</shortName>
    </alternativeName>
</protein>
<dbReference type="EC" id="2.7.4.25" evidence="1"/>
<dbReference type="EMBL" id="CP000863">
    <property type="protein sequence ID" value="ACC56930.1"/>
    <property type="molecule type" value="Genomic_DNA"/>
</dbReference>
<dbReference type="RefSeq" id="WP_000218018.1">
    <property type="nucleotide sequence ID" value="NZ_CP031380.1"/>
</dbReference>
<dbReference type="SMR" id="B2HZE4"/>
<dbReference type="GeneID" id="92893800"/>
<dbReference type="KEGG" id="abc:ACICU_01618"/>
<dbReference type="HOGENOM" id="CLU_079959_2_0_6"/>
<dbReference type="Proteomes" id="UP000008839">
    <property type="component" value="Chromosome"/>
</dbReference>
<dbReference type="GO" id="GO:0005829">
    <property type="term" value="C:cytosol"/>
    <property type="evidence" value="ECO:0007669"/>
    <property type="project" value="TreeGrafter"/>
</dbReference>
<dbReference type="GO" id="GO:0005524">
    <property type="term" value="F:ATP binding"/>
    <property type="evidence" value="ECO:0007669"/>
    <property type="project" value="UniProtKB-UniRule"/>
</dbReference>
<dbReference type="GO" id="GO:0036430">
    <property type="term" value="F:CMP kinase activity"/>
    <property type="evidence" value="ECO:0007669"/>
    <property type="project" value="RHEA"/>
</dbReference>
<dbReference type="GO" id="GO:0036431">
    <property type="term" value="F:dCMP kinase activity"/>
    <property type="evidence" value="ECO:0007669"/>
    <property type="project" value="RHEA"/>
</dbReference>
<dbReference type="GO" id="GO:0015949">
    <property type="term" value="P:nucleobase-containing small molecule interconversion"/>
    <property type="evidence" value="ECO:0007669"/>
    <property type="project" value="TreeGrafter"/>
</dbReference>
<dbReference type="GO" id="GO:0006220">
    <property type="term" value="P:pyrimidine nucleotide metabolic process"/>
    <property type="evidence" value="ECO:0007669"/>
    <property type="project" value="UniProtKB-UniRule"/>
</dbReference>
<dbReference type="CDD" id="cd02020">
    <property type="entry name" value="CMPK"/>
    <property type="match status" value="1"/>
</dbReference>
<dbReference type="Gene3D" id="3.40.50.300">
    <property type="entry name" value="P-loop containing nucleotide triphosphate hydrolases"/>
    <property type="match status" value="1"/>
</dbReference>
<dbReference type="HAMAP" id="MF_00238">
    <property type="entry name" value="Cytidyl_kinase_type1"/>
    <property type="match status" value="1"/>
</dbReference>
<dbReference type="InterPro" id="IPR003136">
    <property type="entry name" value="Cytidylate_kin"/>
</dbReference>
<dbReference type="InterPro" id="IPR011994">
    <property type="entry name" value="Cytidylate_kinase_dom"/>
</dbReference>
<dbReference type="InterPro" id="IPR027417">
    <property type="entry name" value="P-loop_NTPase"/>
</dbReference>
<dbReference type="NCBIfam" id="TIGR00017">
    <property type="entry name" value="cmk"/>
    <property type="match status" value="1"/>
</dbReference>
<dbReference type="PANTHER" id="PTHR21299:SF2">
    <property type="entry name" value="CYTIDYLATE KINASE"/>
    <property type="match status" value="1"/>
</dbReference>
<dbReference type="PANTHER" id="PTHR21299">
    <property type="entry name" value="CYTIDYLATE KINASE/PANTOATE-BETA-ALANINE LIGASE"/>
    <property type="match status" value="1"/>
</dbReference>
<dbReference type="Pfam" id="PF02224">
    <property type="entry name" value="Cytidylate_kin"/>
    <property type="match status" value="1"/>
</dbReference>
<dbReference type="SUPFAM" id="SSF52540">
    <property type="entry name" value="P-loop containing nucleoside triphosphate hydrolases"/>
    <property type="match status" value="1"/>
</dbReference>
<accession>B2HZE4</accession>
<keyword id="KW-0067">ATP-binding</keyword>
<keyword id="KW-0963">Cytoplasm</keyword>
<keyword id="KW-0418">Kinase</keyword>
<keyword id="KW-0547">Nucleotide-binding</keyword>
<keyword id="KW-0808">Transferase</keyword>
<reference key="1">
    <citation type="journal article" date="2008" name="Antimicrob. Agents Chemother.">
        <title>Whole-genome pyrosequencing of an epidemic multidrug-resistant Acinetobacter baumannii strain belonging to the European clone II group.</title>
        <authorList>
            <person name="Iacono M."/>
            <person name="Villa L."/>
            <person name="Fortini D."/>
            <person name="Bordoni R."/>
            <person name="Imperi F."/>
            <person name="Bonnal R.J."/>
            <person name="Sicheritz-Ponten T."/>
            <person name="De Bellis G."/>
            <person name="Visca P."/>
            <person name="Cassone A."/>
            <person name="Carattoli A."/>
        </authorList>
    </citation>
    <scope>NUCLEOTIDE SEQUENCE [LARGE SCALE GENOMIC DNA]</scope>
    <source>
        <strain>ACICU</strain>
    </source>
</reference>
<gene>
    <name evidence="1" type="primary">cmk</name>
    <name type="ordered locus">ACICU_01618</name>
</gene>
<name>KCY_ACIBC</name>
<comment type="catalytic activity">
    <reaction evidence="1">
        <text>CMP + ATP = CDP + ADP</text>
        <dbReference type="Rhea" id="RHEA:11600"/>
        <dbReference type="ChEBI" id="CHEBI:30616"/>
        <dbReference type="ChEBI" id="CHEBI:58069"/>
        <dbReference type="ChEBI" id="CHEBI:60377"/>
        <dbReference type="ChEBI" id="CHEBI:456216"/>
        <dbReference type="EC" id="2.7.4.25"/>
    </reaction>
</comment>
<comment type="catalytic activity">
    <reaction evidence="1">
        <text>dCMP + ATP = dCDP + ADP</text>
        <dbReference type="Rhea" id="RHEA:25094"/>
        <dbReference type="ChEBI" id="CHEBI:30616"/>
        <dbReference type="ChEBI" id="CHEBI:57566"/>
        <dbReference type="ChEBI" id="CHEBI:58593"/>
        <dbReference type="ChEBI" id="CHEBI:456216"/>
        <dbReference type="EC" id="2.7.4.25"/>
    </reaction>
</comment>
<comment type="subcellular location">
    <subcellularLocation>
        <location evidence="1">Cytoplasm</location>
    </subcellularLocation>
</comment>
<comment type="similarity">
    <text evidence="1">Belongs to the cytidylate kinase family. Type 1 subfamily.</text>
</comment>
<proteinExistence type="inferred from homology"/>
<evidence type="ECO:0000255" key="1">
    <source>
        <dbReference type="HAMAP-Rule" id="MF_00238"/>
    </source>
</evidence>
<feature type="chain" id="PRO_1000100639" description="Cytidylate kinase">
    <location>
        <begin position="1"/>
        <end position="228"/>
    </location>
</feature>
<feature type="binding site" evidence="1">
    <location>
        <begin position="10"/>
        <end position="18"/>
    </location>
    <ligand>
        <name>ATP</name>
        <dbReference type="ChEBI" id="CHEBI:30616"/>
    </ligand>
</feature>